<feature type="chain" id="PRO_0000380990" description="8-amino-7-oxononanoate synthase">
    <location>
        <begin position="1"/>
        <end position="384"/>
    </location>
</feature>
<feature type="binding site" evidence="1">
    <location>
        <position position="21"/>
    </location>
    <ligand>
        <name>substrate</name>
    </ligand>
</feature>
<feature type="binding site" evidence="1">
    <location>
        <begin position="108"/>
        <end position="109"/>
    </location>
    <ligand>
        <name>pyridoxal 5'-phosphate</name>
        <dbReference type="ChEBI" id="CHEBI:597326"/>
    </ligand>
</feature>
<feature type="binding site" evidence="1">
    <location>
        <position position="133"/>
    </location>
    <ligand>
        <name>substrate</name>
    </ligand>
</feature>
<feature type="binding site" evidence="1">
    <location>
        <position position="179"/>
    </location>
    <ligand>
        <name>pyridoxal 5'-phosphate</name>
        <dbReference type="ChEBI" id="CHEBI:597326"/>
    </ligand>
</feature>
<feature type="binding site" evidence="1">
    <location>
        <position position="207"/>
    </location>
    <ligand>
        <name>pyridoxal 5'-phosphate</name>
        <dbReference type="ChEBI" id="CHEBI:597326"/>
    </ligand>
</feature>
<feature type="binding site" evidence="1">
    <location>
        <position position="233"/>
    </location>
    <ligand>
        <name>pyridoxal 5'-phosphate</name>
        <dbReference type="ChEBI" id="CHEBI:597326"/>
    </ligand>
</feature>
<feature type="binding site" evidence="1">
    <location>
        <position position="352"/>
    </location>
    <ligand>
        <name>substrate</name>
    </ligand>
</feature>
<feature type="modified residue" description="N6-(pyridoxal phosphate)lysine" evidence="1">
    <location>
        <position position="236"/>
    </location>
</feature>
<dbReference type="EC" id="2.3.1.47" evidence="1"/>
<dbReference type="EMBL" id="CU928158">
    <property type="protein sequence ID" value="CAQ89837.1"/>
    <property type="molecule type" value="Genomic_DNA"/>
</dbReference>
<dbReference type="RefSeq" id="WP_000118859.1">
    <property type="nucleotide sequence ID" value="NC_011740.1"/>
</dbReference>
<dbReference type="SMR" id="B7LJY7"/>
<dbReference type="GeneID" id="75056634"/>
<dbReference type="KEGG" id="efe:EFER_2337"/>
<dbReference type="HOGENOM" id="CLU_015846_11_2_6"/>
<dbReference type="OrthoDB" id="9807157at2"/>
<dbReference type="UniPathway" id="UPA00078"/>
<dbReference type="Proteomes" id="UP000000745">
    <property type="component" value="Chromosome"/>
</dbReference>
<dbReference type="GO" id="GO:0008710">
    <property type="term" value="F:8-amino-7-oxononanoate synthase activity"/>
    <property type="evidence" value="ECO:0007669"/>
    <property type="project" value="UniProtKB-UniRule"/>
</dbReference>
<dbReference type="GO" id="GO:0030170">
    <property type="term" value="F:pyridoxal phosphate binding"/>
    <property type="evidence" value="ECO:0007669"/>
    <property type="project" value="UniProtKB-UniRule"/>
</dbReference>
<dbReference type="GO" id="GO:0009102">
    <property type="term" value="P:biotin biosynthetic process"/>
    <property type="evidence" value="ECO:0007669"/>
    <property type="project" value="UniProtKB-UniRule"/>
</dbReference>
<dbReference type="CDD" id="cd06454">
    <property type="entry name" value="KBL_like"/>
    <property type="match status" value="1"/>
</dbReference>
<dbReference type="FunFam" id="3.40.640.10:FF:000095">
    <property type="entry name" value="8-amino-7-oxononanoate synthase"/>
    <property type="match status" value="1"/>
</dbReference>
<dbReference type="Gene3D" id="3.90.1150.10">
    <property type="entry name" value="Aspartate Aminotransferase, domain 1"/>
    <property type="match status" value="1"/>
</dbReference>
<dbReference type="Gene3D" id="3.40.640.10">
    <property type="entry name" value="Type I PLP-dependent aspartate aminotransferase-like (Major domain)"/>
    <property type="match status" value="1"/>
</dbReference>
<dbReference type="HAMAP" id="MF_01693">
    <property type="entry name" value="BioF_aminotrans_2"/>
    <property type="match status" value="1"/>
</dbReference>
<dbReference type="InterPro" id="IPR001917">
    <property type="entry name" value="Aminotrans_II_pyridoxalP_BS"/>
</dbReference>
<dbReference type="InterPro" id="IPR004839">
    <property type="entry name" value="Aminotransferase_I/II_large"/>
</dbReference>
<dbReference type="InterPro" id="IPR050087">
    <property type="entry name" value="AON_synthase_class-II"/>
</dbReference>
<dbReference type="InterPro" id="IPR004723">
    <property type="entry name" value="AONS_Archaea/Proteobacteria"/>
</dbReference>
<dbReference type="InterPro" id="IPR022834">
    <property type="entry name" value="AONS_Proteobacteria"/>
</dbReference>
<dbReference type="InterPro" id="IPR015424">
    <property type="entry name" value="PyrdxlP-dep_Trfase"/>
</dbReference>
<dbReference type="InterPro" id="IPR015421">
    <property type="entry name" value="PyrdxlP-dep_Trfase_major"/>
</dbReference>
<dbReference type="InterPro" id="IPR015422">
    <property type="entry name" value="PyrdxlP-dep_Trfase_small"/>
</dbReference>
<dbReference type="NCBIfam" id="TIGR00858">
    <property type="entry name" value="bioF"/>
    <property type="match status" value="1"/>
</dbReference>
<dbReference type="PANTHER" id="PTHR13693:SF100">
    <property type="entry name" value="8-AMINO-7-OXONONANOATE SYNTHASE"/>
    <property type="match status" value="1"/>
</dbReference>
<dbReference type="PANTHER" id="PTHR13693">
    <property type="entry name" value="CLASS II AMINOTRANSFERASE/8-AMINO-7-OXONONANOATE SYNTHASE"/>
    <property type="match status" value="1"/>
</dbReference>
<dbReference type="Pfam" id="PF00155">
    <property type="entry name" value="Aminotran_1_2"/>
    <property type="match status" value="1"/>
</dbReference>
<dbReference type="SUPFAM" id="SSF53383">
    <property type="entry name" value="PLP-dependent transferases"/>
    <property type="match status" value="1"/>
</dbReference>
<dbReference type="PROSITE" id="PS00599">
    <property type="entry name" value="AA_TRANSFER_CLASS_2"/>
    <property type="match status" value="1"/>
</dbReference>
<proteinExistence type="inferred from homology"/>
<sequence length="384" mass="41574">MSWQEKINAALDARRTADALRRRYPVAQGAGRWLVADECQYLNFSSNDYLGLSHHPDIIRAWKQGAEQFGVGSGGSGHVSGYSVAHQALEEELAEWLGYSRALLFISGFAANQAVITAMMAKEDRIVADRLSHASLLEAASLSPAQLRRFTHNDVAHLARLLASPCPGQQLVVTEGVFSMDGDRAPLAEIQQVTQQHNGWLVVDDAHGTGVIGEQGRGSCWQQQVKPELLVVTFGKGFGVSGAAVLCSNTVADYLLQFARHLIYSTSMPPAQAQALRASLAVIRGEEGDARREKLAVLITRFRAGLQGLPFTLADSRSAIQPLIVGDNARALHLAEKLRQQGCWVTAIRPPTVPAGTARLRLTLTAAHETQDIDLLLEVLHGNG</sequence>
<keyword id="KW-0093">Biotin biosynthesis</keyword>
<keyword id="KW-0663">Pyridoxal phosphate</keyword>
<keyword id="KW-0808">Transferase</keyword>
<gene>
    <name evidence="1" type="primary">bioF</name>
    <name type="ordered locus">EFER_2337</name>
</gene>
<evidence type="ECO:0000255" key="1">
    <source>
        <dbReference type="HAMAP-Rule" id="MF_01693"/>
    </source>
</evidence>
<comment type="function">
    <text evidence="1">Catalyzes the decarboxylative condensation of pimeloyl-[acyl-carrier protein] and L-alanine to produce 8-amino-7-oxononanoate (AON), [acyl-carrier protein], and carbon dioxide.</text>
</comment>
<comment type="catalytic activity">
    <reaction evidence="1">
        <text>6-carboxyhexanoyl-[ACP] + L-alanine + H(+) = (8S)-8-amino-7-oxononanoate + holo-[ACP] + CO2</text>
        <dbReference type="Rhea" id="RHEA:42288"/>
        <dbReference type="Rhea" id="RHEA-COMP:9685"/>
        <dbReference type="Rhea" id="RHEA-COMP:9955"/>
        <dbReference type="ChEBI" id="CHEBI:15378"/>
        <dbReference type="ChEBI" id="CHEBI:16526"/>
        <dbReference type="ChEBI" id="CHEBI:57972"/>
        <dbReference type="ChEBI" id="CHEBI:64479"/>
        <dbReference type="ChEBI" id="CHEBI:78846"/>
        <dbReference type="ChEBI" id="CHEBI:149468"/>
        <dbReference type="EC" id="2.3.1.47"/>
    </reaction>
</comment>
<comment type="cofactor">
    <cofactor evidence="1">
        <name>pyridoxal 5'-phosphate</name>
        <dbReference type="ChEBI" id="CHEBI:597326"/>
    </cofactor>
</comment>
<comment type="pathway">
    <text evidence="1">Cofactor biosynthesis; biotin biosynthesis.</text>
</comment>
<comment type="subunit">
    <text evidence="1">Homodimer.</text>
</comment>
<comment type="similarity">
    <text evidence="1">Belongs to the class-II pyridoxal-phosphate-dependent aminotransferase family. BioF subfamily.</text>
</comment>
<reference key="1">
    <citation type="journal article" date="2009" name="PLoS Genet.">
        <title>Organised genome dynamics in the Escherichia coli species results in highly diverse adaptive paths.</title>
        <authorList>
            <person name="Touchon M."/>
            <person name="Hoede C."/>
            <person name="Tenaillon O."/>
            <person name="Barbe V."/>
            <person name="Baeriswyl S."/>
            <person name="Bidet P."/>
            <person name="Bingen E."/>
            <person name="Bonacorsi S."/>
            <person name="Bouchier C."/>
            <person name="Bouvet O."/>
            <person name="Calteau A."/>
            <person name="Chiapello H."/>
            <person name="Clermont O."/>
            <person name="Cruveiller S."/>
            <person name="Danchin A."/>
            <person name="Diard M."/>
            <person name="Dossat C."/>
            <person name="Karoui M.E."/>
            <person name="Frapy E."/>
            <person name="Garry L."/>
            <person name="Ghigo J.M."/>
            <person name="Gilles A.M."/>
            <person name="Johnson J."/>
            <person name="Le Bouguenec C."/>
            <person name="Lescat M."/>
            <person name="Mangenot S."/>
            <person name="Martinez-Jehanne V."/>
            <person name="Matic I."/>
            <person name="Nassif X."/>
            <person name="Oztas S."/>
            <person name="Petit M.A."/>
            <person name="Pichon C."/>
            <person name="Rouy Z."/>
            <person name="Ruf C.S."/>
            <person name="Schneider D."/>
            <person name="Tourret J."/>
            <person name="Vacherie B."/>
            <person name="Vallenet D."/>
            <person name="Medigue C."/>
            <person name="Rocha E.P.C."/>
            <person name="Denamur E."/>
        </authorList>
    </citation>
    <scope>NUCLEOTIDE SEQUENCE [LARGE SCALE GENOMIC DNA]</scope>
    <source>
        <strain>ATCC 35469 / DSM 13698 / BCRC 15582 / CCUG 18766 / IAM 14443 / JCM 21226 / LMG 7866 / NBRC 102419 / NCTC 12128 / CDC 0568-73</strain>
    </source>
</reference>
<name>BIOF_ESCF3</name>
<protein>
    <recommendedName>
        <fullName evidence="1">8-amino-7-oxononanoate synthase</fullName>
        <shortName evidence="1">AONS</shortName>
        <ecNumber evidence="1">2.3.1.47</ecNumber>
    </recommendedName>
    <alternativeName>
        <fullName evidence="1">7-keto-8-amino-pelargonic acid synthase</fullName>
        <shortName evidence="1">7-KAP synthase</shortName>
        <shortName evidence="1">KAPA synthase</shortName>
    </alternativeName>
    <alternativeName>
        <fullName evidence="1">8-amino-7-ketopelargonate synthase</fullName>
    </alternativeName>
</protein>
<organism>
    <name type="scientific">Escherichia fergusonii (strain ATCC 35469 / DSM 13698 / CCUG 18766 / IAM 14443 / JCM 21226 / LMG 7866 / NBRC 102419 / NCTC 12128 / CDC 0568-73)</name>
    <dbReference type="NCBI Taxonomy" id="585054"/>
    <lineage>
        <taxon>Bacteria</taxon>
        <taxon>Pseudomonadati</taxon>
        <taxon>Pseudomonadota</taxon>
        <taxon>Gammaproteobacteria</taxon>
        <taxon>Enterobacterales</taxon>
        <taxon>Enterobacteriaceae</taxon>
        <taxon>Escherichia</taxon>
    </lineage>
</organism>
<accession>B7LJY7</accession>